<sequence>MGVHELTHPLVRHKIGLMREADISTKKFRELAAELARLLAYEACGDFPLEVRTITGWDGNPVEIEQIKGKKVTVVPILRAGIGMLDGVLDMIPNAKVSVVGLARNEETLEAHTYLEKFVDKLDERLAVILDPMLATGGSMEATISMLKRNGCRQIRVLALVAAPEGLARVTAAHPDVDIYVAAIDRCLNEHGYILPGLGDAGDKIFGTK</sequence>
<protein>
    <recommendedName>
        <fullName evidence="1">Uracil phosphoribosyltransferase</fullName>
        <ecNumber evidence="1">2.4.2.9</ecNumber>
    </recommendedName>
    <alternativeName>
        <fullName evidence="1">UMP pyrophosphorylase</fullName>
    </alternativeName>
    <alternativeName>
        <fullName evidence="1">UPRTase</fullName>
    </alternativeName>
</protein>
<comment type="function">
    <text evidence="1">Catalyzes the conversion of uracil and 5-phospho-alpha-D-ribose 1-diphosphate (PRPP) to UMP and diphosphate.</text>
</comment>
<comment type="catalytic activity">
    <reaction evidence="1">
        <text>UMP + diphosphate = 5-phospho-alpha-D-ribose 1-diphosphate + uracil</text>
        <dbReference type="Rhea" id="RHEA:13017"/>
        <dbReference type="ChEBI" id="CHEBI:17568"/>
        <dbReference type="ChEBI" id="CHEBI:33019"/>
        <dbReference type="ChEBI" id="CHEBI:57865"/>
        <dbReference type="ChEBI" id="CHEBI:58017"/>
        <dbReference type="EC" id="2.4.2.9"/>
    </reaction>
</comment>
<comment type="cofactor">
    <cofactor evidence="1">
        <name>Mg(2+)</name>
        <dbReference type="ChEBI" id="CHEBI:18420"/>
    </cofactor>
    <text evidence="1">Binds 1 Mg(2+) ion per subunit. The magnesium is bound as Mg-PRPP.</text>
</comment>
<comment type="activity regulation">
    <text evidence="1">Allosterically activated by GTP.</text>
</comment>
<comment type="pathway">
    <text evidence="1">Pyrimidine metabolism; UMP biosynthesis via salvage pathway; UMP from uracil: step 1/1.</text>
</comment>
<comment type="similarity">
    <text evidence="1">Belongs to the UPRTase family.</text>
</comment>
<gene>
    <name evidence="1" type="primary">upp</name>
    <name type="ordered locus">GSU0933</name>
</gene>
<accession>Q74EM9</accession>
<feature type="chain" id="PRO_0000120832" description="Uracil phosphoribosyltransferase">
    <location>
        <begin position="1"/>
        <end position="209"/>
    </location>
</feature>
<feature type="binding site" evidence="1">
    <location>
        <position position="79"/>
    </location>
    <ligand>
        <name>5-phospho-alpha-D-ribose 1-diphosphate</name>
        <dbReference type="ChEBI" id="CHEBI:58017"/>
    </ligand>
</feature>
<feature type="binding site" evidence="1">
    <location>
        <position position="104"/>
    </location>
    <ligand>
        <name>5-phospho-alpha-D-ribose 1-diphosphate</name>
        <dbReference type="ChEBI" id="CHEBI:58017"/>
    </ligand>
</feature>
<feature type="binding site" evidence="1">
    <location>
        <begin position="131"/>
        <end position="139"/>
    </location>
    <ligand>
        <name>5-phospho-alpha-D-ribose 1-diphosphate</name>
        <dbReference type="ChEBI" id="CHEBI:58017"/>
    </ligand>
</feature>
<feature type="binding site" evidence="1">
    <location>
        <position position="194"/>
    </location>
    <ligand>
        <name>uracil</name>
        <dbReference type="ChEBI" id="CHEBI:17568"/>
    </ligand>
</feature>
<feature type="binding site" evidence="1">
    <location>
        <begin position="199"/>
        <end position="201"/>
    </location>
    <ligand>
        <name>uracil</name>
        <dbReference type="ChEBI" id="CHEBI:17568"/>
    </ligand>
</feature>
<feature type="binding site" evidence="1">
    <location>
        <position position="200"/>
    </location>
    <ligand>
        <name>5-phospho-alpha-D-ribose 1-diphosphate</name>
        <dbReference type="ChEBI" id="CHEBI:58017"/>
    </ligand>
</feature>
<dbReference type="EC" id="2.4.2.9" evidence="1"/>
<dbReference type="EMBL" id="AE017180">
    <property type="protein sequence ID" value="AAR34260.1"/>
    <property type="molecule type" value="Genomic_DNA"/>
</dbReference>
<dbReference type="RefSeq" id="NP_951987.1">
    <property type="nucleotide sequence ID" value="NC_002939.5"/>
</dbReference>
<dbReference type="RefSeq" id="WP_010941601.1">
    <property type="nucleotide sequence ID" value="NC_002939.5"/>
</dbReference>
<dbReference type="SMR" id="Q74EM9"/>
<dbReference type="FunCoup" id="Q74EM9">
    <property type="interactions" value="522"/>
</dbReference>
<dbReference type="STRING" id="243231.GSU0933"/>
<dbReference type="EnsemblBacteria" id="AAR34260">
    <property type="protein sequence ID" value="AAR34260"/>
    <property type="gene ID" value="GSU0933"/>
</dbReference>
<dbReference type="KEGG" id="gsu:GSU0933"/>
<dbReference type="PATRIC" id="fig|243231.5.peg.937"/>
<dbReference type="eggNOG" id="COG0035">
    <property type="taxonomic scope" value="Bacteria"/>
</dbReference>
<dbReference type="HOGENOM" id="CLU_067096_2_2_7"/>
<dbReference type="InParanoid" id="Q74EM9"/>
<dbReference type="OrthoDB" id="9781675at2"/>
<dbReference type="UniPathway" id="UPA00574">
    <property type="reaction ID" value="UER00636"/>
</dbReference>
<dbReference type="Proteomes" id="UP000000577">
    <property type="component" value="Chromosome"/>
</dbReference>
<dbReference type="GO" id="GO:0005525">
    <property type="term" value="F:GTP binding"/>
    <property type="evidence" value="ECO:0007669"/>
    <property type="project" value="UniProtKB-KW"/>
</dbReference>
<dbReference type="GO" id="GO:0000287">
    <property type="term" value="F:magnesium ion binding"/>
    <property type="evidence" value="ECO:0007669"/>
    <property type="project" value="UniProtKB-UniRule"/>
</dbReference>
<dbReference type="GO" id="GO:0004845">
    <property type="term" value="F:uracil phosphoribosyltransferase activity"/>
    <property type="evidence" value="ECO:0007669"/>
    <property type="project" value="UniProtKB-UniRule"/>
</dbReference>
<dbReference type="GO" id="GO:0044206">
    <property type="term" value="P:UMP salvage"/>
    <property type="evidence" value="ECO:0007669"/>
    <property type="project" value="UniProtKB-UniRule"/>
</dbReference>
<dbReference type="GO" id="GO:0006223">
    <property type="term" value="P:uracil salvage"/>
    <property type="evidence" value="ECO:0007669"/>
    <property type="project" value="InterPro"/>
</dbReference>
<dbReference type="CDD" id="cd06223">
    <property type="entry name" value="PRTases_typeI"/>
    <property type="match status" value="1"/>
</dbReference>
<dbReference type="FunFam" id="3.40.50.2020:FF:000003">
    <property type="entry name" value="Uracil phosphoribosyltransferase"/>
    <property type="match status" value="1"/>
</dbReference>
<dbReference type="Gene3D" id="3.40.50.2020">
    <property type="match status" value="1"/>
</dbReference>
<dbReference type="HAMAP" id="MF_01218_B">
    <property type="entry name" value="Upp_B"/>
    <property type="match status" value="1"/>
</dbReference>
<dbReference type="InterPro" id="IPR000836">
    <property type="entry name" value="PRibTrfase_dom"/>
</dbReference>
<dbReference type="InterPro" id="IPR029057">
    <property type="entry name" value="PRTase-like"/>
</dbReference>
<dbReference type="InterPro" id="IPR034332">
    <property type="entry name" value="Upp_B"/>
</dbReference>
<dbReference type="InterPro" id="IPR050054">
    <property type="entry name" value="UPRTase/APRTase"/>
</dbReference>
<dbReference type="InterPro" id="IPR005765">
    <property type="entry name" value="Ura_phspho_trans"/>
</dbReference>
<dbReference type="NCBIfam" id="NF001097">
    <property type="entry name" value="PRK00129.1"/>
    <property type="match status" value="1"/>
</dbReference>
<dbReference type="NCBIfam" id="TIGR01091">
    <property type="entry name" value="upp"/>
    <property type="match status" value="1"/>
</dbReference>
<dbReference type="PANTHER" id="PTHR32315">
    <property type="entry name" value="ADENINE PHOSPHORIBOSYLTRANSFERASE"/>
    <property type="match status" value="1"/>
</dbReference>
<dbReference type="PANTHER" id="PTHR32315:SF4">
    <property type="entry name" value="URACIL PHOSPHORIBOSYLTRANSFERASE, CHLOROPLASTIC"/>
    <property type="match status" value="1"/>
</dbReference>
<dbReference type="Pfam" id="PF14681">
    <property type="entry name" value="UPRTase"/>
    <property type="match status" value="1"/>
</dbReference>
<dbReference type="SUPFAM" id="SSF53271">
    <property type="entry name" value="PRTase-like"/>
    <property type="match status" value="1"/>
</dbReference>
<keyword id="KW-0021">Allosteric enzyme</keyword>
<keyword id="KW-0328">Glycosyltransferase</keyword>
<keyword id="KW-0342">GTP-binding</keyword>
<keyword id="KW-0460">Magnesium</keyword>
<keyword id="KW-0547">Nucleotide-binding</keyword>
<keyword id="KW-1185">Reference proteome</keyword>
<keyword id="KW-0808">Transferase</keyword>
<organism>
    <name type="scientific">Geobacter sulfurreducens (strain ATCC 51573 / DSM 12127 / PCA)</name>
    <dbReference type="NCBI Taxonomy" id="243231"/>
    <lineage>
        <taxon>Bacteria</taxon>
        <taxon>Pseudomonadati</taxon>
        <taxon>Thermodesulfobacteriota</taxon>
        <taxon>Desulfuromonadia</taxon>
        <taxon>Geobacterales</taxon>
        <taxon>Geobacteraceae</taxon>
        <taxon>Geobacter</taxon>
    </lineage>
</organism>
<reference key="1">
    <citation type="journal article" date="2003" name="Science">
        <title>Genome of Geobacter sulfurreducens: metal reduction in subsurface environments.</title>
        <authorList>
            <person name="Methe B.A."/>
            <person name="Nelson K.E."/>
            <person name="Eisen J.A."/>
            <person name="Paulsen I.T."/>
            <person name="Nelson W.C."/>
            <person name="Heidelberg J.F."/>
            <person name="Wu D."/>
            <person name="Wu M."/>
            <person name="Ward N.L."/>
            <person name="Beanan M.J."/>
            <person name="Dodson R.J."/>
            <person name="Madupu R."/>
            <person name="Brinkac L.M."/>
            <person name="Daugherty S.C."/>
            <person name="DeBoy R.T."/>
            <person name="Durkin A.S."/>
            <person name="Gwinn M.L."/>
            <person name="Kolonay J.F."/>
            <person name="Sullivan S.A."/>
            <person name="Haft D.H."/>
            <person name="Selengut J."/>
            <person name="Davidsen T.M."/>
            <person name="Zafar N."/>
            <person name="White O."/>
            <person name="Tran B."/>
            <person name="Romero C."/>
            <person name="Forberger H.A."/>
            <person name="Weidman J.F."/>
            <person name="Khouri H.M."/>
            <person name="Feldblyum T.V."/>
            <person name="Utterback T.R."/>
            <person name="Van Aken S.E."/>
            <person name="Lovley D.R."/>
            <person name="Fraser C.M."/>
        </authorList>
    </citation>
    <scope>NUCLEOTIDE SEQUENCE [LARGE SCALE GENOMIC DNA]</scope>
    <source>
        <strain>ATCC 51573 / DSM 12127 / PCA</strain>
    </source>
</reference>
<evidence type="ECO:0000255" key="1">
    <source>
        <dbReference type="HAMAP-Rule" id="MF_01218"/>
    </source>
</evidence>
<name>UPP_GEOSL</name>
<proteinExistence type="inferred from homology"/>